<name>HIS5_IDILO</name>
<keyword id="KW-0028">Amino-acid biosynthesis</keyword>
<keyword id="KW-0963">Cytoplasm</keyword>
<keyword id="KW-0315">Glutamine amidotransferase</keyword>
<keyword id="KW-0368">Histidine biosynthesis</keyword>
<keyword id="KW-0378">Hydrolase</keyword>
<keyword id="KW-0456">Lyase</keyword>
<keyword id="KW-1185">Reference proteome</keyword>
<protein>
    <recommendedName>
        <fullName evidence="1">Imidazole glycerol phosphate synthase subunit HisH</fullName>
        <ecNumber evidence="1">4.3.2.10</ecNumber>
    </recommendedName>
    <alternativeName>
        <fullName evidence="1">IGP synthase glutaminase subunit</fullName>
        <ecNumber evidence="1">3.5.1.2</ecNumber>
    </alternativeName>
    <alternativeName>
        <fullName evidence="1">IGP synthase subunit HisH</fullName>
    </alternativeName>
    <alternativeName>
        <fullName evidence="1">ImGP synthase subunit HisH</fullName>
        <shortName evidence="1">IGPS subunit HisH</shortName>
    </alternativeName>
</protein>
<gene>
    <name evidence="1" type="primary">hisH</name>
    <name type="ordered locus">IL1838</name>
</gene>
<organism>
    <name type="scientific">Idiomarina loihiensis (strain ATCC BAA-735 / DSM 15497 / L2-TR)</name>
    <dbReference type="NCBI Taxonomy" id="283942"/>
    <lineage>
        <taxon>Bacteria</taxon>
        <taxon>Pseudomonadati</taxon>
        <taxon>Pseudomonadota</taxon>
        <taxon>Gammaproteobacteria</taxon>
        <taxon>Alteromonadales</taxon>
        <taxon>Idiomarinaceae</taxon>
        <taxon>Idiomarina</taxon>
    </lineage>
</organism>
<feature type="chain" id="PRO_0000231727" description="Imidazole glycerol phosphate synthase subunit HisH">
    <location>
        <begin position="1"/>
        <end position="196"/>
    </location>
</feature>
<feature type="domain" description="Glutamine amidotransferase type-1" evidence="1">
    <location>
        <begin position="2"/>
        <end position="196"/>
    </location>
</feature>
<feature type="active site" description="Nucleophile" evidence="1">
    <location>
        <position position="77"/>
    </location>
</feature>
<feature type="active site" evidence="1">
    <location>
        <position position="175"/>
    </location>
</feature>
<feature type="active site" evidence="1">
    <location>
        <position position="177"/>
    </location>
</feature>
<evidence type="ECO:0000255" key="1">
    <source>
        <dbReference type="HAMAP-Rule" id="MF_00278"/>
    </source>
</evidence>
<proteinExistence type="inferred from homology"/>
<comment type="function">
    <text evidence="1">IGPS catalyzes the conversion of PRFAR and glutamine to IGP, AICAR and glutamate. The HisH subunit catalyzes the hydrolysis of glutamine to glutamate and ammonia as part of the synthesis of IGP and AICAR. The resulting ammonia molecule is channeled to the active site of HisF.</text>
</comment>
<comment type="catalytic activity">
    <reaction evidence="1">
        <text>5-[(5-phospho-1-deoxy-D-ribulos-1-ylimino)methylamino]-1-(5-phospho-beta-D-ribosyl)imidazole-4-carboxamide + L-glutamine = D-erythro-1-(imidazol-4-yl)glycerol 3-phosphate + 5-amino-1-(5-phospho-beta-D-ribosyl)imidazole-4-carboxamide + L-glutamate + H(+)</text>
        <dbReference type="Rhea" id="RHEA:24793"/>
        <dbReference type="ChEBI" id="CHEBI:15378"/>
        <dbReference type="ChEBI" id="CHEBI:29985"/>
        <dbReference type="ChEBI" id="CHEBI:58278"/>
        <dbReference type="ChEBI" id="CHEBI:58359"/>
        <dbReference type="ChEBI" id="CHEBI:58475"/>
        <dbReference type="ChEBI" id="CHEBI:58525"/>
        <dbReference type="EC" id="4.3.2.10"/>
    </reaction>
</comment>
<comment type="catalytic activity">
    <reaction evidence="1">
        <text>L-glutamine + H2O = L-glutamate + NH4(+)</text>
        <dbReference type="Rhea" id="RHEA:15889"/>
        <dbReference type="ChEBI" id="CHEBI:15377"/>
        <dbReference type="ChEBI" id="CHEBI:28938"/>
        <dbReference type="ChEBI" id="CHEBI:29985"/>
        <dbReference type="ChEBI" id="CHEBI:58359"/>
        <dbReference type="EC" id="3.5.1.2"/>
    </reaction>
</comment>
<comment type="pathway">
    <text evidence="1">Amino-acid biosynthesis; L-histidine biosynthesis; L-histidine from 5-phospho-alpha-D-ribose 1-diphosphate: step 5/9.</text>
</comment>
<comment type="subunit">
    <text evidence="1">Heterodimer of HisH and HisF.</text>
</comment>
<comment type="subcellular location">
    <subcellularLocation>
        <location evidence="1">Cytoplasm</location>
    </subcellularLocation>
</comment>
<accession>Q5QWQ7</accession>
<dbReference type="EC" id="4.3.2.10" evidence="1"/>
<dbReference type="EC" id="3.5.1.2" evidence="1"/>
<dbReference type="EMBL" id="AE017340">
    <property type="protein sequence ID" value="AAV82670.1"/>
    <property type="molecule type" value="Genomic_DNA"/>
</dbReference>
<dbReference type="RefSeq" id="WP_011235070.1">
    <property type="nucleotide sequence ID" value="NC_006512.1"/>
</dbReference>
<dbReference type="SMR" id="Q5QWQ7"/>
<dbReference type="STRING" id="283942.IL1838"/>
<dbReference type="GeneID" id="41337022"/>
<dbReference type="KEGG" id="ilo:IL1838"/>
<dbReference type="eggNOG" id="COG0118">
    <property type="taxonomic scope" value="Bacteria"/>
</dbReference>
<dbReference type="HOGENOM" id="CLU_071837_0_0_6"/>
<dbReference type="OrthoDB" id="9807137at2"/>
<dbReference type="UniPathway" id="UPA00031">
    <property type="reaction ID" value="UER00010"/>
</dbReference>
<dbReference type="Proteomes" id="UP000001171">
    <property type="component" value="Chromosome"/>
</dbReference>
<dbReference type="GO" id="GO:0005737">
    <property type="term" value="C:cytoplasm"/>
    <property type="evidence" value="ECO:0007669"/>
    <property type="project" value="UniProtKB-SubCell"/>
</dbReference>
<dbReference type="GO" id="GO:0004359">
    <property type="term" value="F:glutaminase activity"/>
    <property type="evidence" value="ECO:0007669"/>
    <property type="project" value="UniProtKB-EC"/>
</dbReference>
<dbReference type="GO" id="GO:0000107">
    <property type="term" value="F:imidazoleglycerol-phosphate synthase activity"/>
    <property type="evidence" value="ECO:0007669"/>
    <property type="project" value="UniProtKB-UniRule"/>
</dbReference>
<dbReference type="GO" id="GO:0016829">
    <property type="term" value="F:lyase activity"/>
    <property type="evidence" value="ECO:0007669"/>
    <property type="project" value="UniProtKB-KW"/>
</dbReference>
<dbReference type="GO" id="GO:0000105">
    <property type="term" value="P:L-histidine biosynthetic process"/>
    <property type="evidence" value="ECO:0007669"/>
    <property type="project" value="UniProtKB-UniRule"/>
</dbReference>
<dbReference type="CDD" id="cd01748">
    <property type="entry name" value="GATase1_IGP_Synthase"/>
    <property type="match status" value="1"/>
</dbReference>
<dbReference type="FunFam" id="3.40.50.880:FF:000009">
    <property type="entry name" value="Imidazole glycerol phosphate synthase subunit HisH"/>
    <property type="match status" value="1"/>
</dbReference>
<dbReference type="Gene3D" id="3.40.50.880">
    <property type="match status" value="1"/>
</dbReference>
<dbReference type="HAMAP" id="MF_00278">
    <property type="entry name" value="HisH"/>
    <property type="match status" value="1"/>
</dbReference>
<dbReference type="InterPro" id="IPR029062">
    <property type="entry name" value="Class_I_gatase-like"/>
</dbReference>
<dbReference type="InterPro" id="IPR017926">
    <property type="entry name" value="GATASE"/>
</dbReference>
<dbReference type="InterPro" id="IPR010139">
    <property type="entry name" value="Imidazole-glycPsynth_HisH"/>
</dbReference>
<dbReference type="NCBIfam" id="TIGR01855">
    <property type="entry name" value="IMP_synth_hisH"/>
    <property type="match status" value="1"/>
</dbReference>
<dbReference type="PANTHER" id="PTHR42701">
    <property type="entry name" value="IMIDAZOLE GLYCEROL PHOSPHATE SYNTHASE SUBUNIT HISH"/>
    <property type="match status" value="1"/>
</dbReference>
<dbReference type="PANTHER" id="PTHR42701:SF1">
    <property type="entry name" value="IMIDAZOLE GLYCEROL PHOSPHATE SYNTHASE SUBUNIT HISH"/>
    <property type="match status" value="1"/>
</dbReference>
<dbReference type="Pfam" id="PF00117">
    <property type="entry name" value="GATase"/>
    <property type="match status" value="1"/>
</dbReference>
<dbReference type="PIRSF" id="PIRSF000495">
    <property type="entry name" value="Amidotransf_hisH"/>
    <property type="match status" value="1"/>
</dbReference>
<dbReference type="SUPFAM" id="SSF52317">
    <property type="entry name" value="Class I glutamine amidotransferase-like"/>
    <property type="match status" value="1"/>
</dbReference>
<dbReference type="PROSITE" id="PS51273">
    <property type="entry name" value="GATASE_TYPE_1"/>
    <property type="match status" value="1"/>
</dbReference>
<sequence length="196" mass="21731">MNVVIVDTECANLTSVRFAVERLGYSVLITDDAEQIRAADRVILPGVGTAAAAMRNLQRKQLVEPLRELTQPVLGICLGMQLLTSHSEEGDVDCLNLIPAKTKRLRDSGLPLPHMGWNTLQPTADNPLVDTSDSYCYFVHSFAVAVDEYTIASSEYGERFASMIRHNNYFGAQFHPERSGKTGEALLKRFLELTLC</sequence>
<reference key="1">
    <citation type="journal article" date="2004" name="Proc. Natl. Acad. Sci. U.S.A.">
        <title>Genome sequence of the deep-sea gamma-proteobacterium Idiomarina loihiensis reveals amino acid fermentation as a source of carbon and energy.</title>
        <authorList>
            <person name="Hou S."/>
            <person name="Saw J.H."/>
            <person name="Lee K.S."/>
            <person name="Freitas T.A."/>
            <person name="Belisle C."/>
            <person name="Kawarabayasi Y."/>
            <person name="Donachie S.P."/>
            <person name="Pikina A."/>
            <person name="Galperin M.Y."/>
            <person name="Koonin E.V."/>
            <person name="Makarova K.S."/>
            <person name="Omelchenko M.V."/>
            <person name="Sorokin A."/>
            <person name="Wolf Y.I."/>
            <person name="Li Q.X."/>
            <person name="Keum Y.S."/>
            <person name="Campbell S."/>
            <person name="Denery J."/>
            <person name="Aizawa S."/>
            <person name="Shibata S."/>
            <person name="Malahoff A."/>
            <person name="Alam M."/>
        </authorList>
    </citation>
    <scope>NUCLEOTIDE SEQUENCE [LARGE SCALE GENOMIC DNA]</scope>
    <source>
        <strain>ATCC BAA-735 / DSM 15497 / L2-TR</strain>
    </source>
</reference>